<feature type="chain" id="PRO_0000132578" description="Small ribosomal subunit protein uS4c">
    <location>
        <begin position="1"/>
        <end position="207"/>
    </location>
</feature>
<feature type="domain" description="S4 RNA-binding">
    <location>
        <begin position="92"/>
        <end position="153"/>
    </location>
</feature>
<geneLocation type="chloroplast"/>
<protein>
    <recommendedName>
        <fullName evidence="2">Small ribosomal subunit protein uS4c</fullName>
    </recommendedName>
    <alternativeName>
        <fullName>30S ribosomal protein S4, chloroplastic</fullName>
    </alternativeName>
</protein>
<proteinExistence type="inferred from homology"/>
<sequence length="207" mass="23860">MSRYRGPRLRIIRRLQNLPGLTNKLVESKKNKVSGSDQSIQKKVSQYGIRLEAKQRLRFNYGLTERQLLNYVRIARGAKGSTGQILLQLLEMRLDNILFRLGFVPTIPSARQLINHRHILVNNRIVDVPSFHCKPKDIITIGAPKTYQSILSKRLESFAKDQIPEHLTLSLSEPKKPKGFVNYLINRESIGLKINELLVVEYYSRKA</sequence>
<reference key="1">
    <citation type="journal article" date="2004" name="Syst. Bot.">
        <title>Phylogeny of horsetails (Equisetum) based on the chloroplast rps4 gene and adjacent noncoding sequences.</title>
        <authorList>
            <person name="Guillon J.-M."/>
        </authorList>
        <dbReference type="AGRICOLA" id="IND43653535"/>
    </citation>
    <scope>NUCLEOTIDE SEQUENCE [GENOMIC DNA]</scope>
</reference>
<evidence type="ECO:0000250" key="1"/>
<evidence type="ECO:0000305" key="2"/>
<dbReference type="EMBL" id="AJ583683">
    <property type="protein sequence ID" value="CAE47537.1"/>
    <property type="molecule type" value="Genomic_DNA"/>
</dbReference>
<dbReference type="SMR" id="Q6H9L0"/>
<dbReference type="GO" id="GO:0009507">
    <property type="term" value="C:chloroplast"/>
    <property type="evidence" value="ECO:0007669"/>
    <property type="project" value="UniProtKB-SubCell"/>
</dbReference>
<dbReference type="GO" id="GO:0015935">
    <property type="term" value="C:small ribosomal subunit"/>
    <property type="evidence" value="ECO:0007669"/>
    <property type="project" value="InterPro"/>
</dbReference>
<dbReference type="GO" id="GO:0019843">
    <property type="term" value="F:rRNA binding"/>
    <property type="evidence" value="ECO:0007669"/>
    <property type="project" value="UniProtKB-UniRule"/>
</dbReference>
<dbReference type="GO" id="GO:0003735">
    <property type="term" value="F:structural constituent of ribosome"/>
    <property type="evidence" value="ECO:0007669"/>
    <property type="project" value="InterPro"/>
</dbReference>
<dbReference type="GO" id="GO:0042274">
    <property type="term" value="P:ribosomal small subunit biogenesis"/>
    <property type="evidence" value="ECO:0007669"/>
    <property type="project" value="TreeGrafter"/>
</dbReference>
<dbReference type="GO" id="GO:0006412">
    <property type="term" value="P:translation"/>
    <property type="evidence" value="ECO:0007669"/>
    <property type="project" value="UniProtKB-UniRule"/>
</dbReference>
<dbReference type="CDD" id="cd00165">
    <property type="entry name" value="S4"/>
    <property type="match status" value="1"/>
</dbReference>
<dbReference type="FunFam" id="3.10.290.10:FF:000001">
    <property type="entry name" value="30S ribosomal protein S4"/>
    <property type="match status" value="1"/>
</dbReference>
<dbReference type="FunFam" id="1.10.1050.10:FF:000002">
    <property type="entry name" value="30S ribosomal protein S4, chloroplastic"/>
    <property type="match status" value="1"/>
</dbReference>
<dbReference type="Gene3D" id="1.10.1050.10">
    <property type="entry name" value="Ribosomal Protein S4 Delta 41, Chain A, domain 1"/>
    <property type="match status" value="1"/>
</dbReference>
<dbReference type="Gene3D" id="3.10.290.10">
    <property type="entry name" value="RNA-binding S4 domain"/>
    <property type="match status" value="1"/>
</dbReference>
<dbReference type="HAMAP" id="MF_01306_B">
    <property type="entry name" value="Ribosomal_uS4_B"/>
    <property type="match status" value="1"/>
</dbReference>
<dbReference type="InterPro" id="IPR022801">
    <property type="entry name" value="Ribosomal_uS4"/>
</dbReference>
<dbReference type="InterPro" id="IPR005709">
    <property type="entry name" value="Ribosomal_uS4_bac-type"/>
</dbReference>
<dbReference type="InterPro" id="IPR018079">
    <property type="entry name" value="Ribosomal_uS4_CS"/>
</dbReference>
<dbReference type="InterPro" id="IPR001912">
    <property type="entry name" value="Ribosomal_uS4_N"/>
</dbReference>
<dbReference type="InterPro" id="IPR002942">
    <property type="entry name" value="S4_RNA-bd"/>
</dbReference>
<dbReference type="InterPro" id="IPR036986">
    <property type="entry name" value="S4_RNA-bd_sf"/>
</dbReference>
<dbReference type="NCBIfam" id="NF003717">
    <property type="entry name" value="PRK05327.1"/>
    <property type="match status" value="1"/>
</dbReference>
<dbReference type="NCBIfam" id="TIGR01017">
    <property type="entry name" value="rpsD_bact"/>
    <property type="match status" value="1"/>
</dbReference>
<dbReference type="PANTHER" id="PTHR11831">
    <property type="entry name" value="30S 40S RIBOSOMAL PROTEIN"/>
    <property type="match status" value="1"/>
</dbReference>
<dbReference type="PANTHER" id="PTHR11831:SF4">
    <property type="entry name" value="SMALL RIBOSOMAL SUBUNIT PROTEIN US4M"/>
    <property type="match status" value="1"/>
</dbReference>
<dbReference type="Pfam" id="PF00163">
    <property type="entry name" value="Ribosomal_S4"/>
    <property type="match status" value="1"/>
</dbReference>
<dbReference type="Pfam" id="PF01479">
    <property type="entry name" value="S4"/>
    <property type="match status" value="1"/>
</dbReference>
<dbReference type="SMART" id="SM01390">
    <property type="entry name" value="Ribosomal_S4"/>
    <property type="match status" value="1"/>
</dbReference>
<dbReference type="SMART" id="SM00363">
    <property type="entry name" value="S4"/>
    <property type="match status" value="1"/>
</dbReference>
<dbReference type="SUPFAM" id="SSF55174">
    <property type="entry name" value="Alpha-L RNA-binding motif"/>
    <property type="match status" value="1"/>
</dbReference>
<dbReference type="PROSITE" id="PS00632">
    <property type="entry name" value="RIBOSOMAL_S4"/>
    <property type="match status" value="1"/>
</dbReference>
<dbReference type="PROSITE" id="PS50889">
    <property type="entry name" value="S4"/>
    <property type="match status" value="1"/>
</dbReference>
<organism>
    <name type="scientific">Equisetum laevigatum</name>
    <name type="common">Smooth horsetail</name>
    <dbReference type="NCBI Taxonomy" id="223814"/>
    <lineage>
        <taxon>Eukaryota</taxon>
        <taxon>Viridiplantae</taxon>
        <taxon>Streptophyta</taxon>
        <taxon>Embryophyta</taxon>
        <taxon>Tracheophyta</taxon>
        <taxon>Polypodiopsida</taxon>
        <taxon>Equisetidae</taxon>
        <taxon>Equisetales</taxon>
        <taxon>Equisetaceae</taxon>
        <taxon>Equisetum</taxon>
    </lineage>
</organism>
<keyword id="KW-0150">Chloroplast</keyword>
<keyword id="KW-0934">Plastid</keyword>
<keyword id="KW-0687">Ribonucleoprotein</keyword>
<keyword id="KW-0689">Ribosomal protein</keyword>
<keyword id="KW-0694">RNA-binding</keyword>
<keyword id="KW-0699">rRNA-binding</keyword>
<name>RR4_EQULA</name>
<gene>
    <name type="primary">rps4</name>
</gene>
<accession>Q6H9L0</accession>
<comment type="function">
    <text evidence="1">One of the primary rRNA binding proteins, it binds directly to 16S rRNA where it nucleates assembly of the body of the 30S subunit.</text>
</comment>
<comment type="function">
    <text evidence="1">With S5 and S12 plays an important role in translational accuracy.</text>
</comment>
<comment type="subunit">
    <text evidence="1">Part of the 30S ribosomal subunit. Contacts protein S5. The interaction surface between S4 and S5 is involved in control of translational fidelity (By similarity).</text>
</comment>
<comment type="subcellular location">
    <subcellularLocation>
        <location>Plastid</location>
        <location>Chloroplast</location>
    </subcellularLocation>
</comment>
<comment type="similarity">
    <text evidence="2">Belongs to the universal ribosomal protein uS4 family.</text>
</comment>